<sequence length="439" mass="49180">MGSMCIAMAPRTLLLLIGCQLALGFNEPLNVVSHLSDDWFLFGDSRSDCSYVENNGHPAFDWLDLPQELCHSGKISAKSGNSLFKSFHFTDWYNYTGEGDQVIFYEGVNFSPSHGFKCLAEGDNKRWMGNKARFYALVYKKMAYYRSLSFVNVSYSYGGKAKPTAICKDNTLTLNNPTFISKESNYVDYYYESDANFTLEGCDEFIVPLCVFNGHSRGSSSDPANKYYMDSQMYYNMDTGVFYGFNSTLDVGNTAQNPGLDLTCIYYALTPGNYKAVSLEYLLTIPSKAICLRKPKRFMPVQVVDSRWNNAKHSDNMTAVACQTPYCLFRNTSSGYNGSTHDVHHGGFHFRKLLSGLLYNVSCIAQQGAFFYNNVSSQWPVLGYGQCPTAANIEFIAPVCLYDPLPVILLGVLLGIAVLIIVFLLFYFMTDSGVRLHEA</sequence>
<accession>O91262</accession>
<proteinExistence type="evidence at protein level"/>
<keyword id="KW-1015">Disulfide bond</keyword>
<keyword id="KW-0325">Glycoprotein</keyword>
<keyword id="KW-0348">Hemagglutinin</keyword>
<keyword id="KW-1032">Host cell membrane</keyword>
<keyword id="KW-1043">Host membrane</keyword>
<keyword id="KW-0378">Hydrolase</keyword>
<keyword id="KW-0472">Membrane</keyword>
<keyword id="KW-0732">Signal</keyword>
<keyword id="KW-0812">Transmembrane</keyword>
<keyword id="KW-1133">Transmembrane helix</keyword>
<keyword id="KW-0261">Viral envelope protein</keyword>
<keyword id="KW-0946">Virion</keyword>
<feature type="signal peptide" evidence="1">
    <location>
        <begin position="1"/>
        <end position="22"/>
    </location>
</feature>
<feature type="chain" id="PRO_0000037151" description="Hemagglutinin-esterase" evidence="1">
    <location>
        <begin position="23"/>
        <end position="439"/>
    </location>
</feature>
<feature type="topological domain" description="Virion surface" evidence="1">
    <location>
        <begin position="23"/>
        <end position="407"/>
    </location>
</feature>
<feature type="transmembrane region" description="Helical" evidence="1">
    <location>
        <begin position="408"/>
        <end position="428"/>
    </location>
</feature>
<feature type="topological domain" description="Intravirion" evidence="1">
    <location>
        <begin position="429"/>
        <end position="439"/>
    </location>
</feature>
<feature type="region of interest" description="Esterase domain 1" evidence="1">
    <location>
        <begin position="12"/>
        <end position="132"/>
    </location>
</feature>
<feature type="region of interest" description="Receptor binding" evidence="1">
    <location>
        <begin position="133"/>
        <end position="281"/>
    </location>
</feature>
<feature type="region of interest" description="Esterase domain 2" evidence="1">
    <location>
        <begin position="282"/>
        <end position="395"/>
    </location>
</feature>
<feature type="active site" description="Nucleophile" evidence="1">
    <location>
        <position position="45"/>
    </location>
</feature>
<feature type="active site" description="Charge relay system" evidence="1">
    <location>
        <position position="342"/>
    </location>
</feature>
<feature type="active site" description="Charge relay system" evidence="1">
    <location>
        <position position="345"/>
    </location>
</feature>
<feature type="glycosylation site" description="N-linked (GlcNAc...) asparagine; by host" evidence="1">
    <location>
        <position position="94"/>
    </location>
</feature>
<feature type="glycosylation site" description="N-linked (GlcNAc...) asparagine; by host" evidence="1">
    <location>
        <position position="152"/>
    </location>
</feature>
<feature type="glycosylation site" description="N-linked (GlcNAc...) asparagine; by host" evidence="1">
    <location>
        <position position="196"/>
    </location>
</feature>
<feature type="glycosylation site" description="N-linked (GlcNAc...) asparagine; by host" evidence="1">
    <location>
        <position position="246"/>
    </location>
</feature>
<feature type="glycosylation site" description="N-linked (GlcNAc...) asparagine; by host" evidence="1">
    <location>
        <position position="316"/>
    </location>
</feature>
<feature type="glycosylation site" description="N-linked (GlcNAc...) asparagine; by host" evidence="1">
    <location>
        <position position="331"/>
    </location>
</feature>
<feature type="glycosylation site" description="N-linked (GlcNAc...) asparagine; by host" evidence="1">
    <location>
        <position position="337"/>
    </location>
</feature>
<feature type="glycosylation site" description="N-linked (GlcNAc...) asparagine; by host" evidence="1">
    <location>
        <position position="360"/>
    </location>
</feature>
<feature type="glycosylation site" description="N-linked (GlcNAc...) asparagine; by host" evidence="1">
    <location>
        <position position="374"/>
    </location>
</feature>
<feature type="disulfide bond" evidence="1">
    <location>
        <begin position="49"/>
        <end position="70"/>
    </location>
</feature>
<feature type="disulfide bond" evidence="1">
    <location>
        <begin position="118"/>
        <end position="167"/>
    </location>
</feature>
<feature type="disulfide bond" evidence="1">
    <location>
        <begin position="202"/>
        <end position="291"/>
    </location>
</feature>
<feature type="disulfide bond" evidence="1">
    <location>
        <begin position="210"/>
        <end position="264"/>
    </location>
</feature>
<feature type="disulfide bond" evidence="1">
    <location>
        <begin position="322"/>
        <end position="327"/>
    </location>
</feature>
<feature type="disulfide bond" evidence="1">
    <location>
        <begin position="363"/>
        <end position="387"/>
    </location>
</feature>
<gene>
    <name evidence="1" type="primary">HE</name>
</gene>
<organism>
    <name type="scientific">Puffinosis coronavirus</name>
    <name type="common">PV</name>
    <name type="synonym">Puffinosis virus</name>
    <dbReference type="NCBI Taxonomy" id="76583"/>
    <lineage>
        <taxon>Viruses</taxon>
        <taxon>Riboviria</taxon>
        <taxon>Orthornavirae</taxon>
        <taxon>Pisuviricota</taxon>
        <taxon>Pisoniviricetes</taxon>
        <taxon>Nidovirales</taxon>
        <taxon>Cornidovirineae</taxon>
        <taxon>Coronaviridae</taxon>
        <taxon>Orthocoronavirinae</taxon>
        <taxon>Betacoronavirus</taxon>
        <taxon>Embecovirus</taxon>
        <taxon>Murine coronavirus</taxon>
    </lineage>
</organism>
<organismHost>
    <name type="scientific">Puffinus puffinus</name>
    <name type="common">Manx shearwater</name>
    <dbReference type="NCBI Taxonomy" id="48688"/>
</organismHost>
<name>HEMA_CVPV</name>
<dbReference type="EC" id="3.1.1.53" evidence="1"/>
<dbReference type="EMBL" id="AJ005960">
    <property type="protein sequence ID" value="CAA06776.1"/>
    <property type="molecule type" value="mRNA"/>
</dbReference>
<dbReference type="SMR" id="O91262"/>
<dbReference type="GlyCosmos" id="O91262">
    <property type="glycosylation" value="9 sites, No reported glycans"/>
</dbReference>
<dbReference type="GO" id="GO:0020002">
    <property type="term" value="C:host cell plasma membrane"/>
    <property type="evidence" value="ECO:0007669"/>
    <property type="project" value="UniProtKB-SubCell"/>
</dbReference>
<dbReference type="GO" id="GO:0016020">
    <property type="term" value="C:membrane"/>
    <property type="evidence" value="ECO:0007669"/>
    <property type="project" value="UniProtKB-UniRule"/>
</dbReference>
<dbReference type="GO" id="GO:0019031">
    <property type="term" value="C:viral envelope"/>
    <property type="evidence" value="ECO:0007669"/>
    <property type="project" value="UniProtKB-UniRule"/>
</dbReference>
<dbReference type="GO" id="GO:0055036">
    <property type="term" value="C:virion membrane"/>
    <property type="evidence" value="ECO:0007669"/>
    <property type="project" value="UniProtKB-SubCell"/>
</dbReference>
<dbReference type="GO" id="GO:0046789">
    <property type="term" value="F:host cell surface receptor binding"/>
    <property type="evidence" value="ECO:0007669"/>
    <property type="project" value="UniProtKB-UniRule"/>
</dbReference>
<dbReference type="GO" id="GO:0106331">
    <property type="term" value="F:sialate 4-O-acetylesterase activity"/>
    <property type="evidence" value="ECO:0007669"/>
    <property type="project" value="RHEA"/>
</dbReference>
<dbReference type="GO" id="GO:0106330">
    <property type="term" value="F:sialate 9-O-acetylesterase activity"/>
    <property type="evidence" value="ECO:0007669"/>
    <property type="project" value="RHEA"/>
</dbReference>
<dbReference type="GO" id="GO:0019064">
    <property type="term" value="P:fusion of virus membrane with host plasma membrane"/>
    <property type="evidence" value="ECO:0007669"/>
    <property type="project" value="UniProtKB-UniRule"/>
</dbReference>
<dbReference type="HAMAP" id="MF_04207">
    <property type="entry name" value="BETA_CORONA_HE"/>
    <property type="match status" value="1"/>
</dbReference>
<dbReference type="InterPro" id="IPR008980">
    <property type="entry name" value="Capsid_hemagglutn"/>
</dbReference>
<dbReference type="InterPro" id="IPR042545">
    <property type="entry name" value="HEMA"/>
</dbReference>
<dbReference type="InterPro" id="IPR007142">
    <property type="entry name" value="Hemagglutn-estrase_core"/>
</dbReference>
<dbReference type="InterPro" id="IPR003860">
    <property type="entry name" value="Hemagglutn-estrase_hemagglutn"/>
</dbReference>
<dbReference type="Pfam" id="PF03996">
    <property type="entry name" value="Hema_esterase"/>
    <property type="match status" value="1"/>
</dbReference>
<dbReference type="Pfam" id="PF02710">
    <property type="entry name" value="Hema_HEFG"/>
    <property type="match status" value="1"/>
</dbReference>
<dbReference type="SUPFAM" id="SSF52266">
    <property type="entry name" value="SGNH hydrolase"/>
    <property type="match status" value="1"/>
</dbReference>
<dbReference type="SUPFAM" id="SSF49818">
    <property type="entry name" value="Viral protein domain"/>
    <property type="match status" value="1"/>
</dbReference>
<comment type="function">
    <text evidence="1">Structural protein that makes short spikes at the surface of the virus. Contains receptor binding and receptor-destroying activities. Mediates de-O-acetylation of N-acetyl-4-O-acetylneuraminic acid, which is probably the receptor determinant recognized by the virus on the surface of erythrocytes and susceptible cells. This receptor-destroying activity is important for virus release as it probably helps preventing self-aggregation and ensures the efficient spread of the progeny virus from cell to cell. May serve as a secondary viral attachment protein for initiating infection, the spike protein being the major one. May become a target for both the humoral and the cellular branches of the immune system.</text>
</comment>
<comment type="catalytic activity">
    <reaction evidence="1">
        <text>N-acetyl-9-O-acetylneuraminate + H2O = N-acetylneuraminate + acetate + H(+)</text>
        <dbReference type="Rhea" id="RHEA:22600"/>
        <dbReference type="ChEBI" id="CHEBI:15377"/>
        <dbReference type="ChEBI" id="CHEBI:15378"/>
        <dbReference type="ChEBI" id="CHEBI:28999"/>
        <dbReference type="ChEBI" id="CHEBI:30089"/>
        <dbReference type="ChEBI" id="CHEBI:35418"/>
        <dbReference type="EC" id="3.1.1.53"/>
    </reaction>
</comment>
<comment type="catalytic activity">
    <reaction evidence="1">
        <text>N-acetyl-4-O-acetylneuraminate + H2O = N-acetylneuraminate + acetate + H(+)</text>
        <dbReference type="Rhea" id="RHEA:25564"/>
        <dbReference type="ChEBI" id="CHEBI:15377"/>
        <dbReference type="ChEBI" id="CHEBI:15378"/>
        <dbReference type="ChEBI" id="CHEBI:29006"/>
        <dbReference type="ChEBI" id="CHEBI:30089"/>
        <dbReference type="ChEBI" id="CHEBI:35418"/>
        <dbReference type="EC" id="3.1.1.53"/>
    </reaction>
</comment>
<comment type="subunit">
    <text evidence="1">Homodimer; disulfide-linked. Forms a complex with the M protein in the pre-Golgi. Associates then with S-M complex to form a ternary complex S-M-HE.</text>
</comment>
<comment type="subcellular location">
    <subcellularLocation>
        <location evidence="1">Virion membrane</location>
        <topology evidence="1">Single-pass type I membrane protein</topology>
    </subcellularLocation>
    <subcellularLocation>
        <location evidence="1">Host cell membrane</location>
        <topology evidence="1">Single-pass type I membrane protein</topology>
    </subcellularLocation>
    <text evidence="1">In infected cells becomes incorporated into the envelope of virions during virus assembly at the endoplasmic reticulum and cis Golgi. However, some may escape incorporation into virions and subsequently migrate to the cell surface.</text>
</comment>
<comment type="PTM">
    <text evidence="1">N-glycosylated in the host RER.</text>
</comment>
<comment type="similarity">
    <text evidence="1">Belongs to the influenza type C/coronaviruses hemagglutinin-esterase family.</text>
</comment>
<protein>
    <recommendedName>
        <fullName evidence="1">Hemagglutinin-esterase</fullName>
        <shortName evidence="1">HE protein</shortName>
        <ecNumber evidence="1">3.1.1.53</ecNumber>
    </recommendedName>
    <alternativeName>
        <fullName evidence="1">E3 glycoprotein</fullName>
    </alternativeName>
</protein>
<evidence type="ECO:0000255" key="1">
    <source>
        <dbReference type="HAMAP-Rule" id="MF_04207"/>
    </source>
</evidence>
<reference key="1">
    <citation type="journal article" date="1999" name="J. Virol.">
        <title>Identification of a coronavirus hemagglutinin-esterase with a substrate specificity different from those of influenza C virus and bovine coronavirus.</title>
        <authorList>
            <person name="Klausegger A."/>
            <person name="Strobl B."/>
            <person name="Regl G."/>
            <person name="Kaser A."/>
            <person name="Luytjes W."/>
            <person name="Vlasak R."/>
        </authorList>
    </citation>
    <scope>NUCLEOTIDE SEQUENCE [MRNA]</scope>
</reference>
<reference key="2">
    <citation type="journal article" date="2002" name="J. Gen. Virol.">
        <title>The sialate-4-O-acetylesterases of coronaviruses related to mouse hepatitis virus: a proposal to reorganize group 2 Coronaviridae.</title>
        <authorList>
            <person name="Wurzer W.J."/>
            <person name="Obojes K."/>
            <person name="Vlasak R."/>
        </authorList>
    </citation>
    <scope>CHARACTERIZATION</scope>
</reference>